<feature type="chain" id="PRO_1000188514" description="HMP-PP phosphatase">
    <location>
        <begin position="1"/>
        <end position="272"/>
    </location>
</feature>
<feature type="active site" description="Nucleophile" evidence="1">
    <location>
        <position position="8"/>
    </location>
</feature>
<feature type="binding site" evidence="1">
    <location>
        <position position="8"/>
    </location>
    <ligand>
        <name>Mg(2+)</name>
        <dbReference type="ChEBI" id="CHEBI:18420"/>
    </ligand>
</feature>
<feature type="binding site" evidence="1">
    <location>
        <position position="10"/>
    </location>
    <ligand>
        <name>Mg(2+)</name>
        <dbReference type="ChEBI" id="CHEBI:18420"/>
    </ligand>
</feature>
<feature type="binding site" evidence="1">
    <location>
        <position position="212"/>
    </location>
    <ligand>
        <name>Mg(2+)</name>
        <dbReference type="ChEBI" id="CHEBI:18420"/>
    </ligand>
</feature>
<organism>
    <name type="scientific">Shigella boydii serotype 18 (strain CDC 3083-94 / BS512)</name>
    <dbReference type="NCBI Taxonomy" id="344609"/>
    <lineage>
        <taxon>Bacteria</taxon>
        <taxon>Pseudomonadati</taxon>
        <taxon>Pseudomonadota</taxon>
        <taxon>Gammaproteobacteria</taxon>
        <taxon>Enterobacterales</taxon>
        <taxon>Enterobacteriaceae</taxon>
        <taxon>Shigella</taxon>
    </lineage>
</organism>
<dbReference type="EC" id="3.6.1.-" evidence="1"/>
<dbReference type="EMBL" id="CP001063">
    <property type="protein sequence ID" value="ACD09581.1"/>
    <property type="molecule type" value="Genomic_DNA"/>
</dbReference>
<dbReference type="RefSeq" id="WP_000113027.1">
    <property type="nucleotide sequence ID" value="NC_010658.1"/>
</dbReference>
<dbReference type="SMR" id="B2U4Q1"/>
<dbReference type="STRING" id="344609.SbBS512_E0369"/>
<dbReference type="GeneID" id="93777004"/>
<dbReference type="KEGG" id="sbc:SbBS512_E0369"/>
<dbReference type="HOGENOM" id="CLU_044146_5_2_6"/>
<dbReference type="Proteomes" id="UP000001030">
    <property type="component" value="Chromosome"/>
</dbReference>
<dbReference type="GO" id="GO:0002145">
    <property type="term" value="F:4-amino-5-hydroxymethyl-2-methylpyrimidine diphosphatase activity"/>
    <property type="evidence" value="ECO:0007669"/>
    <property type="project" value="RHEA"/>
</dbReference>
<dbReference type="GO" id="GO:0000287">
    <property type="term" value="F:magnesium ion binding"/>
    <property type="evidence" value="ECO:0000250"/>
    <property type="project" value="UniProtKB"/>
</dbReference>
<dbReference type="GO" id="GO:0016791">
    <property type="term" value="F:phosphatase activity"/>
    <property type="evidence" value="ECO:0000250"/>
    <property type="project" value="UniProtKB"/>
</dbReference>
<dbReference type="CDD" id="cd07516">
    <property type="entry name" value="HAD_Pase"/>
    <property type="match status" value="1"/>
</dbReference>
<dbReference type="FunFam" id="3.30.1240.10:FF:000002">
    <property type="entry name" value="HMP-PP phosphatase"/>
    <property type="match status" value="1"/>
</dbReference>
<dbReference type="Gene3D" id="3.30.1240.10">
    <property type="match status" value="1"/>
</dbReference>
<dbReference type="Gene3D" id="3.40.50.1000">
    <property type="entry name" value="HAD superfamily/HAD-like"/>
    <property type="match status" value="1"/>
</dbReference>
<dbReference type="HAMAP" id="MF_01847">
    <property type="entry name" value="HMP_PP_phosphat"/>
    <property type="match status" value="1"/>
</dbReference>
<dbReference type="InterPro" id="IPR000150">
    <property type="entry name" value="Cof"/>
</dbReference>
<dbReference type="InterPro" id="IPR036412">
    <property type="entry name" value="HAD-like_sf"/>
</dbReference>
<dbReference type="InterPro" id="IPR006379">
    <property type="entry name" value="HAD-SF_hydro_IIB"/>
</dbReference>
<dbReference type="InterPro" id="IPR023214">
    <property type="entry name" value="HAD_sf"/>
</dbReference>
<dbReference type="InterPro" id="IPR023938">
    <property type="entry name" value="HMP-PP_phosphatase"/>
</dbReference>
<dbReference type="NCBIfam" id="TIGR00099">
    <property type="entry name" value="Cof-subfamily"/>
    <property type="match status" value="1"/>
</dbReference>
<dbReference type="NCBIfam" id="TIGR01484">
    <property type="entry name" value="HAD-SF-IIB"/>
    <property type="match status" value="1"/>
</dbReference>
<dbReference type="NCBIfam" id="NF011705">
    <property type="entry name" value="PRK15126.1"/>
    <property type="match status" value="1"/>
</dbReference>
<dbReference type="PANTHER" id="PTHR47267">
    <property type="match status" value="1"/>
</dbReference>
<dbReference type="PANTHER" id="PTHR47267:SF2">
    <property type="entry name" value="HMP-PP PHOSPHATASE"/>
    <property type="match status" value="1"/>
</dbReference>
<dbReference type="Pfam" id="PF08282">
    <property type="entry name" value="Hydrolase_3"/>
    <property type="match status" value="1"/>
</dbReference>
<dbReference type="SFLD" id="SFLDG01140">
    <property type="entry name" value="C2.B:_Phosphomannomutase_and_P"/>
    <property type="match status" value="1"/>
</dbReference>
<dbReference type="SFLD" id="SFLDS00003">
    <property type="entry name" value="Haloacid_Dehalogenase"/>
    <property type="match status" value="1"/>
</dbReference>
<dbReference type="SUPFAM" id="SSF56784">
    <property type="entry name" value="HAD-like"/>
    <property type="match status" value="1"/>
</dbReference>
<dbReference type="PROSITE" id="PS01228">
    <property type="entry name" value="COF_1"/>
    <property type="match status" value="1"/>
</dbReference>
<dbReference type="PROSITE" id="PS01229">
    <property type="entry name" value="COF_2"/>
    <property type="match status" value="1"/>
</dbReference>
<protein>
    <recommendedName>
        <fullName evidence="1">HMP-PP phosphatase</fullName>
        <ecNumber evidence="1">3.6.1.-</ecNumber>
    </recommendedName>
</protein>
<accession>B2U4Q1</accession>
<reference key="1">
    <citation type="submission" date="2008-05" db="EMBL/GenBank/DDBJ databases">
        <title>Complete sequence of Shigella boydii serotype 18 strain BS512.</title>
        <authorList>
            <person name="Rasko D.A."/>
            <person name="Rosovitz M."/>
            <person name="Maurelli A.T."/>
            <person name="Myers G."/>
            <person name="Seshadri R."/>
            <person name="Cer R."/>
            <person name="Jiang L."/>
            <person name="Ravel J."/>
            <person name="Sebastian Y."/>
        </authorList>
    </citation>
    <scope>NUCLEOTIDE SEQUENCE [LARGE SCALE GENOMIC DNA]</scope>
    <source>
        <strain>CDC 3083-94 / BS512</strain>
    </source>
</reference>
<name>COF_SHIB3</name>
<proteinExistence type="inferred from homology"/>
<comment type="function">
    <text evidence="1">Catalyzes the hydrolysis of 4-amino-2-methyl-5-hydroxymethylpyrimidine pyrophosphate (HMP-PP) to 4-amino-2-methyl-5-hydroxymethylpyrimidine phosphate (HMP-P).</text>
</comment>
<comment type="catalytic activity">
    <reaction evidence="1">
        <text>4-amino-2-methyl-5-(diphosphooxymethyl)pyrimidine + H2O = 4-amino-2-methyl-5-(phosphooxymethyl)pyrimidine + phosphate + H(+)</text>
        <dbReference type="Rhea" id="RHEA:27914"/>
        <dbReference type="ChEBI" id="CHEBI:15377"/>
        <dbReference type="ChEBI" id="CHEBI:15378"/>
        <dbReference type="ChEBI" id="CHEBI:43474"/>
        <dbReference type="ChEBI" id="CHEBI:57841"/>
        <dbReference type="ChEBI" id="CHEBI:58354"/>
    </reaction>
</comment>
<comment type="cofactor">
    <cofactor evidence="1">
        <name>Mg(2+)</name>
        <dbReference type="ChEBI" id="CHEBI:18420"/>
    </cofactor>
</comment>
<comment type="similarity">
    <text evidence="1">Belongs to the HAD-like hydrolase superfamily. Cof family.</text>
</comment>
<gene>
    <name evidence="1" type="primary">cof</name>
    <name type="ordered locus">SbBS512_E0369</name>
</gene>
<evidence type="ECO:0000255" key="1">
    <source>
        <dbReference type="HAMAP-Rule" id="MF_01847"/>
    </source>
</evidence>
<keyword id="KW-0378">Hydrolase</keyword>
<keyword id="KW-0460">Magnesium</keyword>
<keyword id="KW-0479">Metal-binding</keyword>
<keyword id="KW-1185">Reference proteome</keyword>
<sequence length="272" mass="30329">MARLAAFDMDGTLLMPDHHLGEKTLSTLARLRERDITLTFATGRHALEMQHILGALSLDAYLITGNGTRVHSLEGELLHRDDLPADVAELVLYQQWDTRASMHIFNDDGWFTGKEIPALLQAFVYSGFRYQIIDVKKMPLGSVTKICFCGDHDDLTRLQIQLYEALGERAHLCFSATDCLEVLPVGCNKGAALTVLTQHLGLSLRDCMAFGDAMNDREMLGSVGSGFIMGNAMPQLRAELPHLPVIGHCRNQAVSHYLTHWLDYPHLPYSPE</sequence>